<protein>
    <recommendedName>
        <fullName evidence="1">Small ribosomal subunit protein uS3</fullName>
    </recommendedName>
    <alternativeName>
        <fullName evidence="2">30S ribosomal protein S3</fullName>
    </alternativeName>
</protein>
<gene>
    <name evidence="1" type="primary">rpsC</name>
    <name type="ordered locus">SPD_0199</name>
</gene>
<reference key="1">
    <citation type="journal article" date="2007" name="J. Bacteriol.">
        <title>Genome sequence of Avery's virulent serotype 2 strain D39 of Streptococcus pneumoniae and comparison with that of unencapsulated laboratory strain R6.</title>
        <authorList>
            <person name="Lanie J.A."/>
            <person name="Ng W.-L."/>
            <person name="Kazmierczak K.M."/>
            <person name="Andrzejewski T.M."/>
            <person name="Davidsen T.M."/>
            <person name="Wayne K.J."/>
            <person name="Tettelin H."/>
            <person name="Glass J.I."/>
            <person name="Winkler M.E."/>
        </authorList>
    </citation>
    <scope>NUCLEOTIDE SEQUENCE [LARGE SCALE GENOMIC DNA]</scope>
    <source>
        <strain>D39 / NCTC 7466</strain>
    </source>
</reference>
<dbReference type="EMBL" id="CP000410">
    <property type="protein sequence ID" value="ABJ53698.1"/>
    <property type="molecule type" value="Genomic_DNA"/>
</dbReference>
<dbReference type="RefSeq" id="WP_000529936.1">
    <property type="nucleotide sequence ID" value="NZ_JAMLJR010000002.1"/>
</dbReference>
<dbReference type="SMR" id="Q04MN0"/>
<dbReference type="PaxDb" id="373153-SPD_0199"/>
<dbReference type="GeneID" id="49600535"/>
<dbReference type="KEGG" id="spd:SPD_0199"/>
<dbReference type="eggNOG" id="COG0092">
    <property type="taxonomic scope" value="Bacteria"/>
</dbReference>
<dbReference type="HOGENOM" id="CLU_058591_0_2_9"/>
<dbReference type="BioCyc" id="SPNE373153:G1G6V-222-MONOMER"/>
<dbReference type="Proteomes" id="UP000001452">
    <property type="component" value="Chromosome"/>
</dbReference>
<dbReference type="GO" id="GO:0022627">
    <property type="term" value="C:cytosolic small ribosomal subunit"/>
    <property type="evidence" value="ECO:0007669"/>
    <property type="project" value="TreeGrafter"/>
</dbReference>
<dbReference type="GO" id="GO:0003729">
    <property type="term" value="F:mRNA binding"/>
    <property type="evidence" value="ECO:0007669"/>
    <property type="project" value="UniProtKB-UniRule"/>
</dbReference>
<dbReference type="GO" id="GO:0019843">
    <property type="term" value="F:rRNA binding"/>
    <property type="evidence" value="ECO:0007669"/>
    <property type="project" value="UniProtKB-UniRule"/>
</dbReference>
<dbReference type="GO" id="GO:0003735">
    <property type="term" value="F:structural constituent of ribosome"/>
    <property type="evidence" value="ECO:0007669"/>
    <property type="project" value="InterPro"/>
</dbReference>
<dbReference type="GO" id="GO:0006412">
    <property type="term" value="P:translation"/>
    <property type="evidence" value="ECO:0007669"/>
    <property type="project" value="UniProtKB-UniRule"/>
</dbReference>
<dbReference type="CDD" id="cd02412">
    <property type="entry name" value="KH-II_30S_S3"/>
    <property type="match status" value="1"/>
</dbReference>
<dbReference type="FunFam" id="3.30.1140.32:FF:000001">
    <property type="entry name" value="30S ribosomal protein S3"/>
    <property type="match status" value="1"/>
</dbReference>
<dbReference type="FunFam" id="3.30.300.20:FF:000001">
    <property type="entry name" value="30S ribosomal protein S3"/>
    <property type="match status" value="1"/>
</dbReference>
<dbReference type="Gene3D" id="3.30.300.20">
    <property type="match status" value="1"/>
</dbReference>
<dbReference type="Gene3D" id="3.30.1140.32">
    <property type="entry name" value="Ribosomal protein S3, C-terminal domain"/>
    <property type="match status" value="1"/>
</dbReference>
<dbReference type="HAMAP" id="MF_01309_B">
    <property type="entry name" value="Ribosomal_uS3_B"/>
    <property type="match status" value="1"/>
</dbReference>
<dbReference type="InterPro" id="IPR004087">
    <property type="entry name" value="KH_dom"/>
</dbReference>
<dbReference type="InterPro" id="IPR015946">
    <property type="entry name" value="KH_dom-like_a/b"/>
</dbReference>
<dbReference type="InterPro" id="IPR004044">
    <property type="entry name" value="KH_dom_type_2"/>
</dbReference>
<dbReference type="InterPro" id="IPR009019">
    <property type="entry name" value="KH_sf_prok-type"/>
</dbReference>
<dbReference type="InterPro" id="IPR036419">
    <property type="entry name" value="Ribosomal_S3_C_sf"/>
</dbReference>
<dbReference type="InterPro" id="IPR005704">
    <property type="entry name" value="Ribosomal_uS3_bac-typ"/>
</dbReference>
<dbReference type="InterPro" id="IPR001351">
    <property type="entry name" value="Ribosomal_uS3_C"/>
</dbReference>
<dbReference type="InterPro" id="IPR018280">
    <property type="entry name" value="Ribosomal_uS3_CS"/>
</dbReference>
<dbReference type="NCBIfam" id="TIGR01009">
    <property type="entry name" value="rpsC_bact"/>
    <property type="match status" value="1"/>
</dbReference>
<dbReference type="PANTHER" id="PTHR11760">
    <property type="entry name" value="30S/40S RIBOSOMAL PROTEIN S3"/>
    <property type="match status" value="1"/>
</dbReference>
<dbReference type="PANTHER" id="PTHR11760:SF19">
    <property type="entry name" value="SMALL RIBOSOMAL SUBUNIT PROTEIN US3C"/>
    <property type="match status" value="1"/>
</dbReference>
<dbReference type="Pfam" id="PF07650">
    <property type="entry name" value="KH_2"/>
    <property type="match status" value="1"/>
</dbReference>
<dbReference type="Pfam" id="PF00189">
    <property type="entry name" value="Ribosomal_S3_C"/>
    <property type="match status" value="1"/>
</dbReference>
<dbReference type="SMART" id="SM00322">
    <property type="entry name" value="KH"/>
    <property type="match status" value="1"/>
</dbReference>
<dbReference type="SUPFAM" id="SSF54814">
    <property type="entry name" value="Prokaryotic type KH domain (KH-domain type II)"/>
    <property type="match status" value="1"/>
</dbReference>
<dbReference type="SUPFAM" id="SSF54821">
    <property type="entry name" value="Ribosomal protein S3 C-terminal domain"/>
    <property type="match status" value="1"/>
</dbReference>
<dbReference type="PROSITE" id="PS50823">
    <property type="entry name" value="KH_TYPE_2"/>
    <property type="match status" value="1"/>
</dbReference>
<dbReference type="PROSITE" id="PS00548">
    <property type="entry name" value="RIBOSOMAL_S3"/>
    <property type="match status" value="1"/>
</dbReference>
<accession>Q04MN0</accession>
<evidence type="ECO:0000255" key="1">
    <source>
        <dbReference type="HAMAP-Rule" id="MF_01309"/>
    </source>
</evidence>
<evidence type="ECO:0000305" key="2"/>
<name>RS3_STRP2</name>
<organism>
    <name type="scientific">Streptococcus pneumoniae serotype 2 (strain D39 / NCTC 7466)</name>
    <dbReference type="NCBI Taxonomy" id="373153"/>
    <lineage>
        <taxon>Bacteria</taxon>
        <taxon>Bacillati</taxon>
        <taxon>Bacillota</taxon>
        <taxon>Bacilli</taxon>
        <taxon>Lactobacillales</taxon>
        <taxon>Streptococcaceae</taxon>
        <taxon>Streptococcus</taxon>
    </lineage>
</organism>
<comment type="function">
    <text evidence="1">Binds the lower part of the 30S subunit head. Binds mRNA in the 70S ribosome, positioning it for translation.</text>
</comment>
<comment type="subunit">
    <text evidence="1">Part of the 30S ribosomal subunit. Forms a tight complex with proteins S10 and S14.</text>
</comment>
<comment type="similarity">
    <text evidence="1">Belongs to the universal ribosomal protein uS3 family.</text>
</comment>
<feature type="chain" id="PRO_0000293893" description="Small ribosomal subunit protein uS3">
    <location>
        <begin position="1"/>
        <end position="217"/>
    </location>
</feature>
<feature type="domain" description="KH type-2" evidence="1">
    <location>
        <begin position="38"/>
        <end position="106"/>
    </location>
</feature>
<proteinExistence type="inferred from homology"/>
<keyword id="KW-1185">Reference proteome</keyword>
<keyword id="KW-0687">Ribonucleoprotein</keyword>
<keyword id="KW-0689">Ribosomal protein</keyword>
<keyword id="KW-0694">RNA-binding</keyword>
<keyword id="KW-0699">rRNA-binding</keyword>
<sequence>MGQKVHPIGMRVGIIRDWDAKWYAEKEYADYLHEDLAIRKFVQKELADAAVSTIEIERAVNKVNVSLHTAKPGMVIGKGGANVDALRAKLNKLTGKQVHINIIEIKQPDLDAHLVGEGIARQLEQRVAFRRAQKQAIQRAMRAGAKGIKTQVSGRLNGADIARAEGYSEGTVPLHTLRADIDYAWEEADTTYGKLGVKVWIYRGEVLPARKNTKGGK</sequence>